<dbReference type="EC" id="4.3.2.10"/>
<dbReference type="EMBL" id="AL513382">
    <property type="protein sequence ID" value="CAD02439.1"/>
    <property type="molecule type" value="Genomic_DNA"/>
</dbReference>
<dbReference type="EMBL" id="AE014613">
    <property type="protein sequence ID" value="AAO68487.1"/>
    <property type="molecule type" value="Genomic_DNA"/>
</dbReference>
<dbReference type="RefSeq" id="NP_456625.1">
    <property type="nucleotide sequence ID" value="NC_003198.1"/>
</dbReference>
<dbReference type="RefSeq" id="WP_000880125.1">
    <property type="nucleotide sequence ID" value="NZ_WSUR01000002.1"/>
</dbReference>
<dbReference type="SMR" id="P0A1R3"/>
<dbReference type="STRING" id="220341.gene:17586194"/>
<dbReference type="KEGG" id="stt:t0796"/>
<dbReference type="KEGG" id="sty:STY2286"/>
<dbReference type="PATRIC" id="fig|220341.7.peg.2306"/>
<dbReference type="eggNOG" id="COG0107">
    <property type="taxonomic scope" value="Bacteria"/>
</dbReference>
<dbReference type="HOGENOM" id="CLU_048577_4_0_6"/>
<dbReference type="OMA" id="WEVYIHG"/>
<dbReference type="OrthoDB" id="9781903at2"/>
<dbReference type="UniPathway" id="UPA00031">
    <property type="reaction ID" value="UER00010"/>
</dbReference>
<dbReference type="Proteomes" id="UP000000541">
    <property type="component" value="Chromosome"/>
</dbReference>
<dbReference type="Proteomes" id="UP000002670">
    <property type="component" value="Chromosome"/>
</dbReference>
<dbReference type="GO" id="GO:0005737">
    <property type="term" value="C:cytoplasm"/>
    <property type="evidence" value="ECO:0007669"/>
    <property type="project" value="UniProtKB-SubCell"/>
</dbReference>
<dbReference type="GO" id="GO:0000107">
    <property type="term" value="F:imidazoleglycerol-phosphate synthase activity"/>
    <property type="evidence" value="ECO:0007669"/>
    <property type="project" value="UniProtKB-UniRule"/>
</dbReference>
<dbReference type="GO" id="GO:0016829">
    <property type="term" value="F:lyase activity"/>
    <property type="evidence" value="ECO:0007669"/>
    <property type="project" value="UniProtKB-KW"/>
</dbReference>
<dbReference type="GO" id="GO:0000105">
    <property type="term" value="P:L-histidine biosynthetic process"/>
    <property type="evidence" value="ECO:0007669"/>
    <property type="project" value="UniProtKB-UniRule"/>
</dbReference>
<dbReference type="CDD" id="cd04731">
    <property type="entry name" value="HisF"/>
    <property type="match status" value="1"/>
</dbReference>
<dbReference type="FunFam" id="3.20.20.70:FF:000006">
    <property type="entry name" value="Imidazole glycerol phosphate synthase subunit HisF"/>
    <property type="match status" value="1"/>
</dbReference>
<dbReference type="Gene3D" id="3.20.20.70">
    <property type="entry name" value="Aldolase class I"/>
    <property type="match status" value="1"/>
</dbReference>
<dbReference type="HAMAP" id="MF_01013">
    <property type="entry name" value="HisF"/>
    <property type="match status" value="1"/>
</dbReference>
<dbReference type="InterPro" id="IPR013785">
    <property type="entry name" value="Aldolase_TIM"/>
</dbReference>
<dbReference type="InterPro" id="IPR006062">
    <property type="entry name" value="His_biosynth"/>
</dbReference>
<dbReference type="InterPro" id="IPR004651">
    <property type="entry name" value="HisF"/>
</dbReference>
<dbReference type="InterPro" id="IPR050064">
    <property type="entry name" value="IGPS_HisA/HisF"/>
</dbReference>
<dbReference type="InterPro" id="IPR011060">
    <property type="entry name" value="RibuloseP-bd_barrel"/>
</dbReference>
<dbReference type="NCBIfam" id="TIGR00735">
    <property type="entry name" value="hisF"/>
    <property type="match status" value="1"/>
</dbReference>
<dbReference type="PANTHER" id="PTHR21235:SF2">
    <property type="entry name" value="IMIDAZOLE GLYCEROL PHOSPHATE SYNTHASE HISHF"/>
    <property type="match status" value="1"/>
</dbReference>
<dbReference type="PANTHER" id="PTHR21235">
    <property type="entry name" value="IMIDAZOLE GLYCEROL PHOSPHATE SYNTHASE SUBUNIT HISF/H IGP SYNTHASE SUBUNIT HISF/H"/>
    <property type="match status" value="1"/>
</dbReference>
<dbReference type="Pfam" id="PF00977">
    <property type="entry name" value="His_biosynth"/>
    <property type="match status" value="1"/>
</dbReference>
<dbReference type="SUPFAM" id="SSF51366">
    <property type="entry name" value="Ribulose-phoshate binding barrel"/>
    <property type="match status" value="1"/>
</dbReference>
<evidence type="ECO:0000250" key="1"/>
<evidence type="ECO:0000255" key="2"/>
<evidence type="ECO:0000305" key="3"/>
<protein>
    <recommendedName>
        <fullName>Imidazole glycerol phosphate synthase subunit HisF</fullName>
        <ecNumber>4.3.2.10</ecNumber>
    </recommendedName>
    <alternativeName>
        <fullName>IGP synthase cyclase subunit</fullName>
    </alternativeName>
    <alternativeName>
        <fullName>IGP synthase subunit HisF</fullName>
    </alternativeName>
    <alternativeName>
        <fullName>ImGP synthase subunit HisF</fullName>
        <shortName>IGPS subunit HisF</shortName>
    </alternativeName>
</protein>
<comment type="function">
    <text evidence="1">IGPS catalyzes the conversion of PRFAR and glutamine to IGP, AICAR and glutamate. The HisF subunit catalyzes the cyclization activity that produces IGP and AICAR from PRFAR using the ammonia provided by the HisH subunit (By similarity).</text>
</comment>
<comment type="catalytic activity">
    <reaction>
        <text>5-[(5-phospho-1-deoxy-D-ribulos-1-ylimino)methylamino]-1-(5-phospho-beta-D-ribosyl)imidazole-4-carboxamide + L-glutamine = D-erythro-1-(imidazol-4-yl)glycerol 3-phosphate + 5-amino-1-(5-phospho-beta-D-ribosyl)imidazole-4-carboxamide + L-glutamate + H(+)</text>
        <dbReference type="Rhea" id="RHEA:24793"/>
        <dbReference type="ChEBI" id="CHEBI:15378"/>
        <dbReference type="ChEBI" id="CHEBI:29985"/>
        <dbReference type="ChEBI" id="CHEBI:58278"/>
        <dbReference type="ChEBI" id="CHEBI:58359"/>
        <dbReference type="ChEBI" id="CHEBI:58475"/>
        <dbReference type="ChEBI" id="CHEBI:58525"/>
        <dbReference type="EC" id="4.3.2.10"/>
    </reaction>
</comment>
<comment type="pathway">
    <text>Amino-acid biosynthesis; L-histidine biosynthesis; L-histidine from 5-phospho-alpha-D-ribose 1-diphosphate: step 5/9.</text>
</comment>
<comment type="subunit">
    <text evidence="1">Heterodimer of HisH and HisF.</text>
</comment>
<comment type="subcellular location">
    <subcellularLocation>
        <location evidence="1">Cytoplasm</location>
    </subcellularLocation>
</comment>
<comment type="similarity">
    <text evidence="3">Belongs to the HisA/HisF family.</text>
</comment>
<keyword id="KW-0028">Amino-acid biosynthesis</keyword>
<keyword id="KW-0963">Cytoplasm</keyword>
<keyword id="KW-0368">Histidine biosynthesis</keyword>
<keyword id="KW-0456">Lyase</keyword>
<sequence>MLAKRIIPCLDVRDGQVVKGVQFRNHEIIGDIVPLAKRYADEGADELVFYDITASSDGRVVDKSWVARVAEVIDIPFCVAGGIRSIDDAAKILSFGADKISINSPALADPTLITRLADRFGVQCIVVGIDTWFDDATGKYHVNQYTGDENRTRVTQWETLDWVQEVQQRGAGEIVLNMMNQDGVRNGYDLTQLKKVRDVCRVPLIASGGAGTMEHFLEAFRDADVDGALAASVFHKQIINIGELKAYLAGQGVEIRIC</sequence>
<accession>P0A1R3</accession>
<accession>P10374</accession>
<organism>
    <name type="scientific">Salmonella typhi</name>
    <dbReference type="NCBI Taxonomy" id="90370"/>
    <lineage>
        <taxon>Bacteria</taxon>
        <taxon>Pseudomonadati</taxon>
        <taxon>Pseudomonadota</taxon>
        <taxon>Gammaproteobacteria</taxon>
        <taxon>Enterobacterales</taxon>
        <taxon>Enterobacteriaceae</taxon>
        <taxon>Salmonella</taxon>
    </lineage>
</organism>
<name>HIS6_SALTI</name>
<proteinExistence type="inferred from homology"/>
<reference key="1">
    <citation type="journal article" date="2001" name="Nature">
        <title>Complete genome sequence of a multiple drug resistant Salmonella enterica serovar Typhi CT18.</title>
        <authorList>
            <person name="Parkhill J."/>
            <person name="Dougan G."/>
            <person name="James K.D."/>
            <person name="Thomson N.R."/>
            <person name="Pickard D."/>
            <person name="Wain J."/>
            <person name="Churcher C.M."/>
            <person name="Mungall K.L."/>
            <person name="Bentley S.D."/>
            <person name="Holden M.T.G."/>
            <person name="Sebaihia M."/>
            <person name="Baker S."/>
            <person name="Basham D."/>
            <person name="Brooks K."/>
            <person name="Chillingworth T."/>
            <person name="Connerton P."/>
            <person name="Cronin A."/>
            <person name="Davis P."/>
            <person name="Davies R.M."/>
            <person name="Dowd L."/>
            <person name="White N."/>
            <person name="Farrar J."/>
            <person name="Feltwell T."/>
            <person name="Hamlin N."/>
            <person name="Haque A."/>
            <person name="Hien T.T."/>
            <person name="Holroyd S."/>
            <person name="Jagels K."/>
            <person name="Krogh A."/>
            <person name="Larsen T.S."/>
            <person name="Leather S."/>
            <person name="Moule S."/>
            <person name="O'Gaora P."/>
            <person name="Parry C."/>
            <person name="Quail M.A."/>
            <person name="Rutherford K.M."/>
            <person name="Simmonds M."/>
            <person name="Skelton J."/>
            <person name="Stevens K."/>
            <person name="Whitehead S."/>
            <person name="Barrell B.G."/>
        </authorList>
    </citation>
    <scope>NUCLEOTIDE SEQUENCE [LARGE SCALE GENOMIC DNA]</scope>
    <source>
        <strain>CT18</strain>
    </source>
</reference>
<reference key="2">
    <citation type="journal article" date="2003" name="J. Bacteriol.">
        <title>Comparative genomics of Salmonella enterica serovar Typhi strains Ty2 and CT18.</title>
        <authorList>
            <person name="Deng W."/>
            <person name="Liou S.-R."/>
            <person name="Plunkett G. III"/>
            <person name="Mayhew G.F."/>
            <person name="Rose D.J."/>
            <person name="Burland V."/>
            <person name="Kodoyianni V."/>
            <person name="Schwartz D.C."/>
            <person name="Blattner F.R."/>
        </authorList>
    </citation>
    <scope>NUCLEOTIDE SEQUENCE [LARGE SCALE GENOMIC DNA]</scope>
    <source>
        <strain>ATCC 700931 / Ty2</strain>
    </source>
</reference>
<feature type="chain" id="PRO_0000142224" description="Imidazole glycerol phosphate synthase subunit HisF">
    <location>
        <begin position="1"/>
        <end position="258"/>
    </location>
</feature>
<feature type="active site" evidence="2">
    <location>
        <position position="11"/>
    </location>
</feature>
<feature type="active site" evidence="2">
    <location>
        <position position="130"/>
    </location>
</feature>
<gene>
    <name type="primary">hisF</name>
    <name type="ordered locus">STY2286</name>
    <name type="ordered locus">t0796</name>
</gene>